<dbReference type="EC" id="6.2.1.1" evidence="1"/>
<dbReference type="EMBL" id="CP001173">
    <property type="protein sequence ID" value="ACI27148.1"/>
    <property type="molecule type" value="Genomic_DNA"/>
</dbReference>
<dbReference type="RefSeq" id="WP_001175481.1">
    <property type="nucleotide sequence ID" value="NC_011333.1"/>
</dbReference>
<dbReference type="SMR" id="B5Z6E9"/>
<dbReference type="KEGG" id="hpg:HPG27_383"/>
<dbReference type="HOGENOM" id="CLU_000022_3_6_7"/>
<dbReference type="Proteomes" id="UP000001735">
    <property type="component" value="Chromosome"/>
</dbReference>
<dbReference type="GO" id="GO:0005829">
    <property type="term" value="C:cytosol"/>
    <property type="evidence" value="ECO:0007669"/>
    <property type="project" value="TreeGrafter"/>
</dbReference>
<dbReference type="GO" id="GO:0003987">
    <property type="term" value="F:acetate-CoA ligase activity"/>
    <property type="evidence" value="ECO:0007669"/>
    <property type="project" value="UniProtKB-UniRule"/>
</dbReference>
<dbReference type="GO" id="GO:0016208">
    <property type="term" value="F:AMP binding"/>
    <property type="evidence" value="ECO:0007669"/>
    <property type="project" value="InterPro"/>
</dbReference>
<dbReference type="GO" id="GO:0005524">
    <property type="term" value="F:ATP binding"/>
    <property type="evidence" value="ECO:0007669"/>
    <property type="project" value="UniProtKB-KW"/>
</dbReference>
<dbReference type="GO" id="GO:0046872">
    <property type="term" value="F:metal ion binding"/>
    <property type="evidence" value="ECO:0007669"/>
    <property type="project" value="UniProtKB-KW"/>
</dbReference>
<dbReference type="GO" id="GO:0019427">
    <property type="term" value="P:acetyl-CoA biosynthetic process from acetate"/>
    <property type="evidence" value="ECO:0007669"/>
    <property type="project" value="InterPro"/>
</dbReference>
<dbReference type="CDD" id="cd05966">
    <property type="entry name" value="ACS"/>
    <property type="match status" value="1"/>
</dbReference>
<dbReference type="FunFam" id="3.40.50.12780:FF:000001">
    <property type="entry name" value="Acetyl-coenzyme A synthetase"/>
    <property type="match status" value="1"/>
</dbReference>
<dbReference type="Gene3D" id="3.30.300.30">
    <property type="match status" value="1"/>
</dbReference>
<dbReference type="Gene3D" id="3.40.50.12780">
    <property type="entry name" value="N-terminal domain of ligase-like"/>
    <property type="match status" value="1"/>
</dbReference>
<dbReference type="HAMAP" id="MF_01123">
    <property type="entry name" value="Ac_CoA_synth"/>
    <property type="match status" value="1"/>
</dbReference>
<dbReference type="InterPro" id="IPR011904">
    <property type="entry name" value="Ac_CoA_lig"/>
</dbReference>
<dbReference type="InterPro" id="IPR032387">
    <property type="entry name" value="ACAS_N"/>
</dbReference>
<dbReference type="InterPro" id="IPR025110">
    <property type="entry name" value="AMP-bd_C"/>
</dbReference>
<dbReference type="InterPro" id="IPR045851">
    <property type="entry name" value="AMP-bd_C_sf"/>
</dbReference>
<dbReference type="InterPro" id="IPR020845">
    <property type="entry name" value="AMP-binding_CS"/>
</dbReference>
<dbReference type="InterPro" id="IPR000873">
    <property type="entry name" value="AMP-dep_synth/lig_dom"/>
</dbReference>
<dbReference type="InterPro" id="IPR042099">
    <property type="entry name" value="ANL_N_sf"/>
</dbReference>
<dbReference type="NCBIfam" id="TIGR02188">
    <property type="entry name" value="Ac_CoA_lig_AcsA"/>
    <property type="match status" value="1"/>
</dbReference>
<dbReference type="NCBIfam" id="NF001208">
    <property type="entry name" value="PRK00174.1"/>
    <property type="match status" value="1"/>
</dbReference>
<dbReference type="PANTHER" id="PTHR24095">
    <property type="entry name" value="ACETYL-COENZYME A SYNTHETASE"/>
    <property type="match status" value="1"/>
</dbReference>
<dbReference type="PANTHER" id="PTHR24095:SF14">
    <property type="entry name" value="ACETYL-COENZYME A SYNTHETASE 1"/>
    <property type="match status" value="1"/>
</dbReference>
<dbReference type="Pfam" id="PF16177">
    <property type="entry name" value="ACAS_N"/>
    <property type="match status" value="1"/>
</dbReference>
<dbReference type="Pfam" id="PF00501">
    <property type="entry name" value="AMP-binding"/>
    <property type="match status" value="1"/>
</dbReference>
<dbReference type="Pfam" id="PF13193">
    <property type="entry name" value="AMP-binding_C"/>
    <property type="match status" value="1"/>
</dbReference>
<dbReference type="SUPFAM" id="SSF56801">
    <property type="entry name" value="Acetyl-CoA synthetase-like"/>
    <property type="match status" value="1"/>
</dbReference>
<dbReference type="PROSITE" id="PS00455">
    <property type="entry name" value="AMP_BINDING"/>
    <property type="match status" value="1"/>
</dbReference>
<reference key="1">
    <citation type="journal article" date="2009" name="J. Bacteriol.">
        <title>The complete genome sequence of Helicobacter pylori strain G27.</title>
        <authorList>
            <person name="Baltrus D.A."/>
            <person name="Amieva M.R."/>
            <person name="Covacci A."/>
            <person name="Lowe T.M."/>
            <person name="Merrell D.S."/>
            <person name="Ottemann K.M."/>
            <person name="Stein M."/>
            <person name="Salama N.R."/>
            <person name="Guillemin K."/>
        </authorList>
    </citation>
    <scope>NUCLEOTIDE SEQUENCE [LARGE SCALE GENOMIC DNA]</scope>
    <source>
        <strain>G27</strain>
    </source>
</reference>
<feature type="chain" id="PRO_1000137265" description="Acetyl-coenzyme A synthetase">
    <location>
        <begin position="1"/>
        <end position="662"/>
    </location>
</feature>
<feature type="binding site" evidence="1">
    <location>
        <begin position="197"/>
        <end position="200"/>
    </location>
    <ligand>
        <name>CoA</name>
        <dbReference type="ChEBI" id="CHEBI:57287"/>
    </ligand>
</feature>
<feature type="binding site" evidence="1">
    <location>
        <position position="317"/>
    </location>
    <ligand>
        <name>CoA</name>
        <dbReference type="ChEBI" id="CHEBI:57287"/>
    </ligand>
</feature>
<feature type="binding site" evidence="1">
    <location>
        <begin position="393"/>
        <end position="395"/>
    </location>
    <ligand>
        <name>ATP</name>
        <dbReference type="ChEBI" id="CHEBI:30616"/>
    </ligand>
</feature>
<feature type="binding site" evidence="1">
    <location>
        <begin position="417"/>
        <end position="422"/>
    </location>
    <ligand>
        <name>ATP</name>
        <dbReference type="ChEBI" id="CHEBI:30616"/>
    </ligand>
</feature>
<feature type="binding site" evidence="1">
    <location>
        <position position="510"/>
    </location>
    <ligand>
        <name>ATP</name>
        <dbReference type="ChEBI" id="CHEBI:30616"/>
    </ligand>
</feature>
<feature type="binding site" evidence="1">
    <location>
        <position position="525"/>
    </location>
    <ligand>
        <name>ATP</name>
        <dbReference type="ChEBI" id="CHEBI:30616"/>
    </ligand>
</feature>
<feature type="binding site" evidence="1">
    <location>
        <position position="533"/>
    </location>
    <ligand>
        <name>CoA</name>
        <dbReference type="ChEBI" id="CHEBI:57287"/>
    </ligand>
</feature>
<feature type="binding site" evidence="1">
    <location>
        <position position="536"/>
    </location>
    <ligand>
        <name>ATP</name>
        <dbReference type="ChEBI" id="CHEBI:30616"/>
    </ligand>
</feature>
<feature type="binding site" evidence="1">
    <location>
        <position position="549"/>
    </location>
    <ligand>
        <name>Mg(2+)</name>
        <dbReference type="ChEBI" id="CHEBI:18420"/>
    </ligand>
</feature>
<feature type="binding site" evidence="1">
    <location>
        <position position="552"/>
    </location>
    <ligand>
        <name>Mg(2+)</name>
        <dbReference type="ChEBI" id="CHEBI:18420"/>
    </ligand>
</feature>
<feature type="modified residue" description="N6-acetyllysine" evidence="1">
    <location>
        <position position="623"/>
    </location>
</feature>
<gene>
    <name evidence="1" type="primary">acsA</name>
    <name type="ordered locus">HPG27_383</name>
</gene>
<sequence length="662" mass="74941">MQLDNDSEFAKKIFNPNRAFAKQARIKNMCEYKDLVHEANEDYEHFWGELAKQKLTWFKPFDKVLNSDNAPFFKWFENGKINVSYNCIDRHLKDKKNKVAIIFEGEMGDYNVITYRKLHSEVNKTANLLKNEFNVKKGDRVIIYMPMIVESVYMMLACTRIGAIHSIVFAGFSPEALRDRINDAQAKLVITADGTFRKGKPYMLKPALDKALENNACPSVEKALIVIRNAKEIDYVRGRDFVYNEMVNYQSDKCEPEMMDSEDPLFLLYTSGSTGKPKGVQHSSAGYLLWAQMTMEWVFDIRDNDNFWCTADIGWITGHTYVVYGPLACGATTLILEGTMSYPDYGRWWRMIEEYRVDKFYTSPTAIRMLHAKGENEPSKYNLESLKVLGTVGEPINPTAWKWFYEKIGNSKCSIVDTWWQTETGGHIISPLPGATPIRASCATLPLPGIHAEVLNEDGTKTKPGEQGFLCITKPWPSMVRNIWGDEKRYIDSYFSQIKLNGEYVYLSGDGAIVDENGYITIIGRTDDIVNVSGHRIGTAEVESAISKHEMVAECAVVGIPDTIKGEGLFAFVVLCDGAKCNLGESLELLKEMNHILSVEIGKIAKLDNVMYVPGLPKTRSGKIMRRLLKSIAKKESITQDLSTLEDVNVVKEIMSIVQMEE</sequence>
<evidence type="ECO:0000255" key="1">
    <source>
        <dbReference type="HAMAP-Rule" id="MF_01123"/>
    </source>
</evidence>
<protein>
    <recommendedName>
        <fullName evidence="1">Acetyl-coenzyme A synthetase</fullName>
        <shortName evidence="1">AcCoA synthetase</shortName>
        <shortName evidence="1">Acs</shortName>
        <ecNumber evidence="1">6.2.1.1</ecNumber>
    </recommendedName>
    <alternativeName>
        <fullName evidence="1">Acetate--CoA ligase</fullName>
    </alternativeName>
    <alternativeName>
        <fullName evidence="1">Acyl-activating enzyme</fullName>
    </alternativeName>
</protein>
<keyword id="KW-0007">Acetylation</keyword>
<keyword id="KW-0067">ATP-binding</keyword>
<keyword id="KW-0436">Ligase</keyword>
<keyword id="KW-0460">Magnesium</keyword>
<keyword id="KW-0479">Metal-binding</keyword>
<keyword id="KW-0547">Nucleotide-binding</keyword>
<keyword id="KW-1185">Reference proteome</keyword>
<accession>B5Z6E9</accession>
<name>ACSA_HELPG</name>
<comment type="function">
    <text evidence="1">Catalyzes the conversion of acetate into acetyl-CoA (AcCoA), an essential intermediate at the junction of anabolic and catabolic pathways. AcsA undergoes a two-step reaction. In the first half reaction, AcsA combines acetate with ATP to form acetyl-adenylate (AcAMP) intermediate. In the second half reaction, it can then transfer the acetyl group from AcAMP to the sulfhydryl group of CoA, forming the product AcCoA.</text>
</comment>
<comment type="catalytic activity">
    <reaction evidence="1">
        <text>acetate + ATP + CoA = acetyl-CoA + AMP + diphosphate</text>
        <dbReference type="Rhea" id="RHEA:23176"/>
        <dbReference type="ChEBI" id="CHEBI:30089"/>
        <dbReference type="ChEBI" id="CHEBI:30616"/>
        <dbReference type="ChEBI" id="CHEBI:33019"/>
        <dbReference type="ChEBI" id="CHEBI:57287"/>
        <dbReference type="ChEBI" id="CHEBI:57288"/>
        <dbReference type="ChEBI" id="CHEBI:456215"/>
        <dbReference type="EC" id="6.2.1.1"/>
    </reaction>
</comment>
<comment type="cofactor">
    <cofactor evidence="1">
        <name>Mg(2+)</name>
        <dbReference type="ChEBI" id="CHEBI:18420"/>
    </cofactor>
</comment>
<comment type="PTM">
    <text evidence="1">Acetylated. Deacetylation by the SIR2-homolog deacetylase activates the enzyme.</text>
</comment>
<comment type="similarity">
    <text evidence="1">Belongs to the ATP-dependent AMP-binding enzyme family.</text>
</comment>
<proteinExistence type="inferred from homology"/>
<organism>
    <name type="scientific">Helicobacter pylori (strain G27)</name>
    <dbReference type="NCBI Taxonomy" id="563041"/>
    <lineage>
        <taxon>Bacteria</taxon>
        <taxon>Pseudomonadati</taxon>
        <taxon>Campylobacterota</taxon>
        <taxon>Epsilonproteobacteria</taxon>
        <taxon>Campylobacterales</taxon>
        <taxon>Helicobacteraceae</taxon>
        <taxon>Helicobacter</taxon>
    </lineage>
</organism>